<comment type="function">
    <text evidence="1">NDH-1 shuttles electrons from an unknown electron donor, via FMN and iron-sulfur (Fe-S) centers, to quinones in the respiratory and/or the photosynthetic chain. The immediate electron acceptor for the enzyme in this species is believed to be plastoquinone. Couples the redox reaction to proton translocation, and thus conserves the redox energy in a proton gradient. Cyanobacterial NDH-1 also plays a role in inorganic carbon-concentration.</text>
</comment>
<comment type="catalytic activity">
    <reaction evidence="1">
        <text>a plastoquinone + NADH + (n+1) H(+)(in) = a plastoquinol + NAD(+) + n H(+)(out)</text>
        <dbReference type="Rhea" id="RHEA:42608"/>
        <dbReference type="Rhea" id="RHEA-COMP:9561"/>
        <dbReference type="Rhea" id="RHEA-COMP:9562"/>
        <dbReference type="ChEBI" id="CHEBI:15378"/>
        <dbReference type="ChEBI" id="CHEBI:17757"/>
        <dbReference type="ChEBI" id="CHEBI:57540"/>
        <dbReference type="ChEBI" id="CHEBI:57945"/>
        <dbReference type="ChEBI" id="CHEBI:62192"/>
    </reaction>
</comment>
<comment type="catalytic activity">
    <reaction evidence="1">
        <text>a plastoquinone + NADPH + (n+1) H(+)(in) = a plastoquinol + NADP(+) + n H(+)(out)</text>
        <dbReference type="Rhea" id="RHEA:42612"/>
        <dbReference type="Rhea" id="RHEA-COMP:9561"/>
        <dbReference type="Rhea" id="RHEA-COMP:9562"/>
        <dbReference type="ChEBI" id="CHEBI:15378"/>
        <dbReference type="ChEBI" id="CHEBI:17757"/>
        <dbReference type="ChEBI" id="CHEBI:57783"/>
        <dbReference type="ChEBI" id="CHEBI:58349"/>
        <dbReference type="ChEBI" id="CHEBI:62192"/>
    </reaction>
</comment>
<comment type="subunit">
    <text evidence="1">NDH-1 can be composed of about 15 different subunits; different subcomplexes with different compositions have been identified which probably have different functions.</text>
</comment>
<comment type="subcellular location">
    <subcellularLocation>
        <location evidence="1">Cellular thylakoid membrane</location>
        <topology evidence="1">Multi-pass membrane protein</topology>
    </subcellularLocation>
</comment>
<comment type="similarity">
    <text evidence="1">Belongs to the complex I subunit 3 family.</text>
</comment>
<protein>
    <recommendedName>
        <fullName evidence="1">NAD(P)H-quinone oxidoreductase subunit 3</fullName>
        <ecNumber evidence="1">7.1.1.-</ecNumber>
    </recommendedName>
    <alternativeName>
        <fullName evidence="1">NAD(P)H dehydrogenase subunit 3</fullName>
    </alternativeName>
    <alternativeName>
        <fullName evidence="1">NADH-plastoquinone oxidoreductase subunit 3</fullName>
    </alternativeName>
    <alternativeName>
        <fullName evidence="1">NDH-1 subunit 3</fullName>
        <shortName evidence="1">NDH-C</shortName>
    </alternativeName>
</protein>
<feature type="chain" id="PRO_0000362703" description="NAD(P)H-quinone oxidoreductase subunit 3">
    <location>
        <begin position="1"/>
        <end position="120"/>
    </location>
</feature>
<feature type="transmembrane region" description="Helical" evidence="1">
    <location>
        <begin position="7"/>
        <end position="27"/>
    </location>
</feature>
<feature type="transmembrane region" description="Helical" evidence="1">
    <location>
        <begin position="64"/>
        <end position="84"/>
    </location>
</feature>
<feature type="transmembrane region" description="Helical" evidence="1">
    <location>
        <begin position="89"/>
        <end position="109"/>
    </location>
</feature>
<reference key="1">
    <citation type="journal article" date="2007" name="DNA Res.">
        <title>Complete genomic structure of the bloom-forming toxic cyanobacterium Microcystis aeruginosa NIES-843.</title>
        <authorList>
            <person name="Kaneko T."/>
            <person name="Nakajima N."/>
            <person name="Okamoto S."/>
            <person name="Suzuki I."/>
            <person name="Tanabe Y."/>
            <person name="Tamaoki M."/>
            <person name="Nakamura Y."/>
            <person name="Kasai F."/>
            <person name="Watanabe A."/>
            <person name="Kawashima K."/>
            <person name="Kishida Y."/>
            <person name="Ono A."/>
            <person name="Shimizu Y."/>
            <person name="Takahashi C."/>
            <person name="Minami C."/>
            <person name="Fujishiro T."/>
            <person name="Kohara M."/>
            <person name="Katoh M."/>
            <person name="Nakazaki N."/>
            <person name="Nakayama S."/>
            <person name="Yamada M."/>
            <person name="Tabata S."/>
            <person name="Watanabe M.M."/>
        </authorList>
    </citation>
    <scope>NUCLEOTIDE SEQUENCE [LARGE SCALE GENOMIC DNA]</scope>
    <source>
        <strain>NIES-843 / IAM M-247</strain>
    </source>
</reference>
<accession>B0JSV4</accession>
<keyword id="KW-0472">Membrane</keyword>
<keyword id="KW-0520">NAD</keyword>
<keyword id="KW-0521">NADP</keyword>
<keyword id="KW-0618">Plastoquinone</keyword>
<keyword id="KW-0874">Quinone</keyword>
<keyword id="KW-0793">Thylakoid</keyword>
<keyword id="KW-1278">Translocase</keyword>
<keyword id="KW-0812">Transmembrane</keyword>
<keyword id="KW-1133">Transmembrane helix</keyword>
<keyword id="KW-0813">Transport</keyword>
<dbReference type="EC" id="7.1.1.-" evidence="1"/>
<dbReference type="EMBL" id="AP009552">
    <property type="protein sequence ID" value="BAG00998.1"/>
    <property type="molecule type" value="Genomic_DNA"/>
</dbReference>
<dbReference type="RefSeq" id="WP_002739390.1">
    <property type="nucleotide sequence ID" value="NC_010296.1"/>
</dbReference>
<dbReference type="SMR" id="B0JSV4"/>
<dbReference type="STRING" id="449447.MAE_11760"/>
<dbReference type="PaxDb" id="449447-MAE_11760"/>
<dbReference type="EnsemblBacteria" id="BAG00998">
    <property type="protein sequence ID" value="BAG00998"/>
    <property type="gene ID" value="MAE_11760"/>
</dbReference>
<dbReference type="GeneID" id="66707575"/>
<dbReference type="KEGG" id="mar:MAE_11760"/>
<dbReference type="eggNOG" id="COG0838">
    <property type="taxonomic scope" value="Bacteria"/>
</dbReference>
<dbReference type="HOGENOM" id="CLU_119549_1_1_3"/>
<dbReference type="BioCyc" id="MAER449447:MAE_RS05180-MONOMER"/>
<dbReference type="Proteomes" id="UP000001510">
    <property type="component" value="Chromosome"/>
</dbReference>
<dbReference type="GO" id="GO:0030964">
    <property type="term" value="C:NADH dehydrogenase complex"/>
    <property type="evidence" value="ECO:0007669"/>
    <property type="project" value="TreeGrafter"/>
</dbReference>
<dbReference type="GO" id="GO:0031676">
    <property type="term" value="C:plasma membrane-derived thylakoid membrane"/>
    <property type="evidence" value="ECO:0007669"/>
    <property type="project" value="UniProtKB-SubCell"/>
</dbReference>
<dbReference type="GO" id="GO:0008137">
    <property type="term" value="F:NADH dehydrogenase (ubiquinone) activity"/>
    <property type="evidence" value="ECO:0007669"/>
    <property type="project" value="InterPro"/>
</dbReference>
<dbReference type="GO" id="GO:0048038">
    <property type="term" value="F:quinone binding"/>
    <property type="evidence" value="ECO:0007669"/>
    <property type="project" value="UniProtKB-KW"/>
</dbReference>
<dbReference type="GO" id="GO:0019684">
    <property type="term" value="P:photosynthesis, light reaction"/>
    <property type="evidence" value="ECO:0007669"/>
    <property type="project" value="UniProtKB-UniRule"/>
</dbReference>
<dbReference type="FunFam" id="1.20.58.1610:FF:000001">
    <property type="entry name" value="NAD(P)H-quinone oxidoreductase subunit 3, chloroplastic"/>
    <property type="match status" value="1"/>
</dbReference>
<dbReference type="Gene3D" id="1.20.58.1610">
    <property type="entry name" value="NADH:ubiquinone/plastoquinone oxidoreductase, chain 3"/>
    <property type="match status" value="1"/>
</dbReference>
<dbReference type="HAMAP" id="MF_01394">
    <property type="entry name" value="NDH1_NuoA"/>
    <property type="match status" value="1"/>
</dbReference>
<dbReference type="InterPro" id="IPR023043">
    <property type="entry name" value="NAD(P)H_OxRDtase_bac/plastid"/>
</dbReference>
<dbReference type="InterPro" id="IPR000440">
    <property type="entry name" value="NADH_UbQ/plastoQ_OxRdtase_su3"/>
</dbReference>
<dbReference type="InterPro" id="IPR038430">
    <property type="entry name" value="NDAH_ubi_oxred_su3_sf"/>
</dbReference>
<dbReference type="PANTHER" id="PTHR11058">
    <property type="entry name" value="NADH-UBIQUINONE OXIDOREDUCTASE CHAIN 3"/>
    <property type="match status" value="1"/>
</dbReference>
<dbReference type="PANTHER" id="PTHR11058:SF9">
    <property type="entry name" value="NADH-UBIQUINONE OXIDOREDUCTASE CHAIN 3"/>
    <property type="match status" value="1"/>
</dbReference>
<dbReference type="Pfam" id="PF00507">
    <property type="entry name" value="Oxidored_q4"/>
    <property type="match status" value="1"/>
</dbReference>
<evidence type="ECO:0000255" key="1">
    <source>
        <dbReference type="HAMAP-Rule" id="MF_01394"/>
    </source>
</evidence>
<name>NU3C_MICAN</name>
<organism>
    <name type="scientific">Microcystis aeruginosa (strain NIES-843 / IAM M-2473)</name>
    <dbReference type="NCBI Taxonomy" id="449447"/>
    <lineage>
        <taxon>Bacteria</taxon>
        <taxon>Bacillati</taxon>
        <taxon>Cyanobacteriota</taxon>
        <taxon>Cyanophyceae</taxon>
        <taxon>Oscillatoriophycideae</taxon>
        <taxon>Chroococcales</taxon>
        <taxon>Microcystaceae</taxon>
        <taxon>Microcystis</taxon>
    </lineage>
</organism>
<sequence length="120" mass="13530">MFVLKGYEYFLGFLLACSLVPILSLTASKVLRPSGGGPERRTTYESGMEPIGGAWIQFNIRYYMFALVFVVFDVETVFLYPWAVAFNQLGLLAFVEALIFIAILVVALVYAWRKGALEWS</sequence>
<gene>
    <name evidence="1" type="primary">ndhC</name>
    <name type="ordered locus">MAE_11760</name>
</gene>
<proteinExistence type="inferred from homology"/>